<comment type="similarity">
    <text evidence="1">Belongs to the bacterial ribosomal protein bL27 family.</text>
</comment>
<sequence length="84" mass="9165">MAHKKAGGSTRNGRDSNAQRLGIKCFGGELIPAGSIIVRQRGTKFHPGKNVGCGKDHTIFATVKGKVEFKKKGIKKRTYINIVR</sequence>
<feature type="chain" id="PRO_0000181060" description="Large ribosomal subunit protein bL27">
    <location>
        <begin position="1"/>
        <end position="84"/>
    </location>
</feature>
<name>RL27_BUCAP</name>
<protein>
    <recommendedName>
        <fullName evidence="1">Large ribosomal subunit protein bL27</fullName>
    </recommendedName>
    <alternativeName>
        <fullName evidence="2">50S ribosomal protein L27</fullName>
    </alternativeName>
</protein>
<accession>Q8K9G2</accession>
<dbReference type="EMBL" id="AE013218">
    <property type="protein sequence ID" value="AAM67927.1"/>
    <property type="molecule type" value="Genomic_DNA"/>
</dbReference>
<dbReference type="RefSeq" id="WP_011053894.1">
    <property type="nucleotide sequence ID" value="NC_004061.1"/>
</dbReference>
<dbReference type="SMR" id="Q8K9G2"/>
<dbReference type="STRING" id="198804.BUsg_375"/>
<dbReference type="GeneID" id="93003845"/>
<dbReference type="KEGG" id="bas:BUsg_375"/>
<dbReference type="eggNOG" id="COG0211">
    <property type="taxonomic scope" value="Bacteria"/>
</dbReference>
<dbReference type="HOGENOM" id="CLU_095424_4_1_6"/>
<dbReference type="Proteomes" id="UP000000416">
    <property type="component" value="Chromosome"/>
</dbReference>
<dbReference type="GO" id="GO:0022625">
    <property type="term" value="C:cytosolic large ribosomal subunit"/>
    <property type="evidence" value="ECO:0007669"/>
    <property type="project" value="TreeGrafter"/>
</dbReference>
<dbReference type="GO" id="GO:0003735">
    <property type="term" value="F:structural constituent of ribosome"/>
    <property type="evidence" value="ECO:0007669"/>
    <property type="project" value="InterPro"/>
</dbReference>
<dbReference type="GO" id="GO:0006412">
    <property type="term" value="P:translation"/>
    <property type="evidence" value="ECO:0007669"/>
    <property type="project" value="UniProtKB-UniRule"/>
</dbReference>
<dbReference type="FunFam" id="2.40.50.100:FF:000001">
    <property type="entry name" value="50S ribosomal protein L27"/>
    <property type="match status" value="1"/>
</dbReference>
<dbReference type="Gene3D" id="2.40.50.100">
    <property type="match status" value="1"/>
</dbReference>
<dbReference type="HAMAP" id="MF_00539">
    <property type="entry name" value="Ribosomal_bL27"/>
    <property type="match status" value="1"/>
</dbReference>
<dbReference type="InterPro" id="IPR001684">
    <property type="entry name" value="Ribosomal_bL27"/>
</dbReference>
<dbReference type="InterPro" id="IPR018261">
    <property type="entry name" value="Ribosomal_bL27_CS"/>
</dbReference>
<dbReference type="NCBIfam" id="TIGR00062">
    <property type="entry name" value="L27"/>
    <property type="match status" value="1"/>
</dbReference>
<dbReference type="PANTHER" id="PTHR15893:SF0">
    <property type="entry name" value="LARGE RIBOSOMAL SUBUNIT PROTEIN BL27M"/>
    <property type="match status" value="1"/>
</dbReference>
<dbReference type="PANTHER" id="PTHR15893">
    <property type="entry name" value="RIBOSOMAL PROTEIN L27"/>
    <property type="match status" value="1"/>
</dbReference>
<dbReference type="Pfam" id="PF01016">
    <property type="entry name" value="Ribosomal_L27"/>
    <property type="match status" value="1"/>
</dbReference>
<dbReference type="PRINTS" id="PR00063">
    <property type="entry name" value="RIBOSOMALL27"/>
</dbReference>
<dbReference type="SUPFAM" id="SSF110324">
    <property type="entry name" value="Ribosomal L27 protein-like"/>
    <property type="match status" value="1"/>
</dbReference>
<dbReference type="PROSITE" id="PS00831">
    <property type="entry name" value="RIBOSOMAL_L27"/>
    <property type="match status" value="1"/>
</dbReference>
<keyword id="KW-0687">Ribonucleoprotein</keyword>
<keyword id="KW-0689">Ribosomal protein</keyword>
<organism>
    <name type="scientific">Buchnera aphidicola subsp. Schizaphis graminum (strain Sg)</name>
    <dbReference type="NCBI Taxonomy" id="198804"/>
    <lineage>
        <taxon>Bacteria</taxon>
        <taxon>Pseudomonadati</taxon>
        <taxon>Pseudomonadota</taxon>
        <taxon>Gammaproteobacteria</taxon>
        <taxon>Enterobacterales</taxon>
        <taxon>Erwiniaceae</taxon>
        <taxon>Buchnera</taxon>
    </lineage>
</organism>
<gene>
    <name evidence="1" type="primary">rpmA</name>
    <name type="ordered locus">BUsg_375</name>
</gene>
<proteinExistence type="inferred from homology"/>
<reference key="1">
    <citation type="journal article" date="2002" name="Science">
        <title>50 million years of genomic stasis in endosymbiotic bacteria.</title>
        <authorList>
            <person name="Tamas I."/>
            <person name="Klasson L."/>
            <person name="Canbaeck B."/>
            <person name="Naeslund A.K."/>
            <person name="Eriksson A.-S."/>
            <person name="Wernegreen J.J."/>
            <person name="Sandstroem J.P."/>
            <person name="Moran N.A."/>
            <person name="Andersson S.G.E."/>
        </authorList>
    </citation>
    <scope>NUCLEOTIDE SEQUENCE [LARGE SCALE GENOMIC DNA]</scope>
    <source>
        <strain>Sg</strain>
    </source>
</reference>
<evidence type="ECO:0000255" key="1">
    <source>
        <dbReference type="HAMAP-Rule" id="MF_00539"/>
    </source>
</evidence>
<evidence type="ECO:0000305" key="2"/>